<evidence type="ECO:0000250" key="1">
    <source>
        <dbReference type="UniProtKB" id="Q6DKJ4"/>
    </source>
</evidence>
<evidence type="ECO:0000255" key="2">
    <source>
        <dbReference type="PROSITE-ProRule" id="PRU00691"/>
    </source>
</evidence>
<evidence type="ECO:0000269" key="3">
    <source>
    </source>
</evidence>
<evidence type="ECO:0000269" key="4">
    <source>
    </source>
</evidence>
<evidence type="ECO:0000269" key="5">
    <source>
    </source>
</evidence>
<evidence type="ECO:0000269" key="6">
    <source>
    </source>
</evidence>
<evidence type="ECO:0000269" key="7">
    <source>
    </source>
</evidence>
<evidence type="ECO:0000303" key="8">
    <source>
    </source>
</evidence>
<evidence type="ECO:0000305" key="9"/>
<feature type="initiator methionine" description="Removed" evidence="1">
    <location>
        <position position="1"/>
    </location>
</feature>
<feature type="chain" id="PRO_0000332934" description="Nucleoredoxin">
    <location>
        <begin position="2"/>
        <end position="435"/>
    </location>
</feature>
<feature type="domain" description="Thioredoxin" evidence="2">
    <location>
        <begin position="167"/>
        <end position="314"/>
    </location>
</feature>
<feature type="modified residue" description="N-acetylserine" evidence="1">
    <location>
        <position position="2"/>
    </location>
</feature>
<feature type="splice variant" id="VSP_033396" description="In isoform 2." evidence="8">
    <original>KEEEAPLLFFVAGEDDMTDSLRDYTNLPEA</original>
    <variation>SAHHSGHVSPGQVRDGCRRDHPSHCGDFCE</variation>
    <location>
        <begin position="362"/>
        <end position="391"/>
    </location>
</feature>
<feature type="splice variant" id="VSP_033397" description="In isoform 2." evidence="8">
    <location>
        <begin position="392"/>
        <end position="435"/>
    </location>
</feature>
<feature type="mutagenesis site" description="Loss of function and interaction with DVL1; when associated with S-208." evidence="4">
    <original>C</original>
    <variation>S</variation>
    <location>
        <position position="205"/>
    </location>
</feature>
<feature type="mutagenesis site" description="Loss of function and interaction with DVL1; when associated with S-205." evidence="4">
    <original>C</original>
    <variation>S</variation>
    <location>
        <position position="208"/>
    </location>
</feature>
<gene>
    <name type="primary">Nxn</name>
    <name type="synonym">Gn25</name>
</gene>
<keyword id="KW-0007">Acetylation</keyword>
<keyword id="KW-0025">Alternative splicing</keyword>
<keyword id="KW-0963">Cytoplasm</keyword>
<keyword id="KW-0217">Developmental protein</keyword>
<keyword id="KW-0221">Differentiation</keyword>
<keyword id="KW-0520">NAD</keyword>
<keyword id="KW-0539">Nucleus</keyword>
<keyword id="KW-0560">Oxidoreductase</keyword>
<keyword id="KW-1185">Reference proteome</keyword>
<keyword id="KW-0879">Wnt signaling pathway</keyword>
<comment type="function">
    <text evidence="3 4 5 6">Functions as a redox-dependent negative regulator of the Wnt signaling pathway, possibly by preventing ubiquitination of DVL3 by the BCR(KLHL12) complex. May also function as a transcriptional regulator act as a regulator of protein phosphatase 2A (PP2A).</text>
</comment>
<comment type="catalytic activity">
    <reaction evidence="7">
        <text>[protein]-dithiol + NAD(+) = [protein]-disulfide + NADH + H(+)</text>
        <dbReference type="Rhea" id="RHEA:18749"/>
        <dbReference type="Rhea" id="RHEA-COMP:10593"/>
        <dbReference type="Rhea" id="RHEA-COMP:10594"/>
        <dbReference type="ChEBI" id="CHEBI:15378"/>
        <dbReference type="ChEBI" id="CHEBI:29950"/>
        <dbReference type="ChEBI" id="CHEBI:50058"/>
        <dbReference type="ChEBI" id="CHEBI:57540"/>
        <dbReference type="ChEBI" id="CHEBI:57945"/>
        <dbReference type="EC" id="1.8.1.8"/>
    </reaction>
</comment>
<comment type="catalytic activity">
    <reaction evidence="7">
        <text>[protein]-dithiol + NADP(+) = [protein]-disulfide + NADPH + H(+)</text>
        <dbReference type="Rhea" id="RHEA:18753"/>
        <dbReference type="Rhea" id="RHEA-COMP:10593"/>
        <dbReference type="Rhea" id="RHEA-COMP:10594"/>
        <dbReference type="ChEBI" id="CHEBI:15378"/>
        <dbReference type="ChEBI" id="CHEBI:29950"/>
        <dbReference type="ChEBI" id="CHEBI:50058"/>
        <dbReference type="ChEBI" id="CHEBI:57783"/>
        <dbReference type="ChEBI" id="CHEBI:58349"/>
        <dbReference type="EC" id="1.8.1.8"/>
    </reaction>
</comment>
<comment type="subunit">
    <text evidence="4 5">Associates with the phosphatase 2A holoenzyme. Interacts with PPP2CA; the interaction is direct. Interacts with DVL1 (via PDZ domain); the interaction is direct and regulated by oxidative stress.</text>
</comment>
<comment type="interaction">
    <interactant intactId="EBI-309684">
        <id>P97346</id>
    </interactant>
    <interactant intactId="EBI-712311">
        <id>P67775</id>
        <label>PPP2CA</label>
    </interactant>
    <organismsDiffer>true</organismsDiffer>
    <experiments>2</experiments>
</comment>
<comment type="interaction">
    <interactant intactId="EBI-309684">
        <id>P97346</id>
    </interactant>
    <interactant intactId="EBI-302388">
        <id>P30153</id>
        <label>PPP2R1A</label>
    </interactant>
    <organismsDiffer>true</organismsDiffer>
    <experiments>2</experiments>
</comment>
<comment type="interaction">
    <interactant intactId="EBI-309684">
        <id>P97346</id>
    </interactant>
    <interactant intactId="EBI-1045560">
        <id>Q9UGP8</id>
        <label>SEC63</label>
    </interactant>
    <organismsDiffer>true</organismsDiffer>
    <experiments>6</experiments>
</comment>
<comment type="subcellular location">
    <subcellularLocation>
        <location evidence="4">Cytoplasm</location>
        <location evidence="4">Cytosol</location>
    </subcellularLocation>
    <subcellularLocation>
        <location evidence="3 7">Nucleus</location>
    </subcellularLocation>
</comment>
<comment type="alternative products">
    <event type="alternative splicing"/>
    <isoform>
        <id>P97346-1</id>
        <name>1</name>
        <sequence type="displayed"/>
    </isoform>
    <isoform>
        <id>P97346-2</id>
        <name>2</name>
        <sequence type="described" ref="VSP_033396 VSP_033397"/>
    </isoform>
</comment>
<comment type="tissue specificity">
    <text evidence="7">Widely expressed with higher expression in testis and skin.</text>
</comment>
<comment type="developmental stage">
    <text evidence="7">Specifically expressed form 9.5 dpc to 12.5 dpc in limb buds.</text>
</comment>
<comment type="disruption phenotype">
    <text evidence="6">Perinatal lethality, possibly due abnormal cardiovascular development. Osteoblasts show an aberrant activation of the Wnt signaling pathway.</text>
</comment>
<comment type="similarity">
    <text evidence="9">Belongs to the nucleoredoxin family.</text>
</comment>
<accession>P97346</accession>
<accession>Q5H8T6</accession>
<accession>Q5H8U0</accession>
<accession>Q99KF3</accession>
<reference key="1">
    <citation type="journal article" date="1997" name="Genomics">
        <title>Cloning and characterization of the nucleoredoxin gene that encodes a novel nuclear protein related to thioredoxin.</title>
        <authorList>
            <person name="Kurooka H."/>
            <person name="Kato K."/>
            <person name="Minoguchi S."/>
            <person name="Takahashi Y."/>
            <person name="Ikeda J.-E."/>
            <person name="Habu S."/>
            <person name="Osawa N."/>
            <person name="Buchberg A.M."/>
            <person name="Moriwaki K."/>
            <person name="Shisa H."/>
            <person name="Honjo T."/>
        </authorList>
    </citation>
    <scope>NUCLEOTIDE SEQUENCE [GENOMIC DNA]</scope>
    <scope>CATALYTIC ACTIVITY</scope>
    <scope>SUBCELLULAR LOCATION</scope>
    <scope>TISSUE SPECIFICITY</scope>
    <scope>DEVELOPMENTAL STAGE</scope>
    <source>
        <strain>C57BL/6J</strain>
        <tissue>Skin</tissue>
    </source>
</reference>
<reference key="2">
    <citation type="journal article" date="2005" name="Biochem. Biophys. Res. Commun.">
        <title>Susceptibility to streptozotocin-induced diabetes is mapped to mouse chromosome 11.</title>
        <authorList>
            <person name="Babaya N."/>
            <person name="Ikegami H."/>
            <person name="Fujisawa T."/>
            <person name="Nojima K."/>
            <person name="Itoi-Babaya M."/>
            <person name="Inoue K."/>
            <person name="Ohno T."/>
            <person name="Shibata M."/>
            <person name="Ogihara T."/>
        </authorList>
    </citation>
    <scope>NUCLEOTIDE SEQUENCE [GENOMIC DNA / MRNA] (ISOFORM 1)</scope>
    <source>
        <strain>C3H/HeJ</strain>
        <strain>CTS</strain>
        <strain>NOD</strain>
        <strain>NSY</strain>
        <tissue>Kidney</tissue>
        <tissue>Liver</tissue>
    </source>
</reference>
<reference key="3">
    <citation type="journal article" date="2005" name="Science">
        <title>The transcriptional landscape of the mammalian genome.</title>
        <authorList>
            <person name="Carninci P."/>
            <person name="Kasukawa T."/>
            <person name="Katayama S."/>
            <person name="Gough J."/>
            <person name="Frith M.C."/>
            <person name="Maeda N."/>
            <person name="Oyama R."/>
            <person name="Ravasi T."/>
            <person name="Lenhard B."/>
            <person name="Wells C."/>
            <person name="Kodzius R."/>
            <person name="Shimokawa K."/>
            <person name="Bajic V.B."/>
            <person name="Brenner S.E."/>
            <person name="Batalov S."/>
            <person name="Forrest A.R."/>
            <person name="Zavolan M."/>
            <person name="Davis M.J."/>
            <person name="Wilming L.G."/>
            <person name="Aidinis V."/>
            <person name="Allen J.E."/>
            <person name="Ambesi-Impiombato A."/>
            <person name="Apweiler R."/>
            <person name="Aturaliya R.N."/>
            <person name="Bailey T.L."/>
            <person name="Bansal M."/>
            <person name="Baxter L."/>
            <person name="Beisel K.W."/>
            <person name="Bersano T."/>
            <person name="Bono H."/>
            <person name="Chalk A.M."/>
            <person name="Chiu K.P."/>
            <person name="Choudhary V."/>
            <person name="Christoffels A."/>
            <person name="Clutterbuck D.R."/>
            <person name="Crowe M.L."/>
            <person name="Dalla E."/>
            <person name="Dalrymple B.P."/>
            <person name="de Bono B."/>
            <person name="Della Gatta G."/>
            <person name="di Bernardo D."/>
            <person name="Down T."/>
            <person name="Engstrom P."/>
            <person name="Fagiolini M."/>
            <person name="Faulkner G."/>
            <person name="Fletcher C.F."/>
            <person name="Fukushima T."/>
            <person name="Furuno M."/>
            <person name="Futaki S."/>
            <person name="Gariboldi M."/>
            <person name="Georgii-Hemming P."/>
            <person name="Gingeras T.R."/>
            <person name="Gojobori T."/>
            <person name="Green R.E."/>
            <person name="Gustincich S."/>
            <person name="Harbers M."/>
            <person name="Hayashi Y."/>
            <person name="Hensch T.K."/>
            <person name="Hirokawa N."/>
            <person name="Hill D."/>
            <person name="Huminiecki L."/>
            <person name="Iacono M."/>
            <person name="Ikeo K."/>
            <person name="Iwama A."/>
            <person name="Ishikawa T."/>
            <person name="Jakt M."/>
            <person name="Kanapin A."/>
            <person name="Katoh M."/>
            <person name="Kawasawa Y."/>
            <person name="Kelso J."/>
            <person name="Kitamura H."/>
            <person name="Kitano H."/>
            <person name="Kollias G."/>
            <person name="Krishnan S.P."/>
            <person name="Kruger A."/>
            <person name="Kummerfeld S.K."/>
            <person name="Kurochkin I.V."/>
            <person name="Lareau L.F."/>
            <person name="Lazarevic D."/>
            <person name="Lipovich L."/>
            <person name="Liu J."/>
            <person name="Liuni S."/>
            <person name="McWilliam S."/>
            <person name="Madan Babu M."/>
            <person name="Madera M."/>
            <person name="Marchionni L."/>
            <person name="Matsuda H."/>
            <person name="Matsuzawa S."/>
            <person name="Miki H."/>
            <person name="Mignone F."/>
            <person name="Miyake S."/>
            <person name="Morris K."/>
            <person name="Mottagui-Tabar S."/>
            <person name="Mulder N."/>
            <person name="Nakano N."/>
            <person name="Nakauchi H."/>
            <person name="Ng P."/>
            <person name="Nilsson R."/>
            <person name="Nishiguchi S."/>
            <person name="Nishikawa S."/>
            <person name="Nori F."/>
            <person name="Ohara O."/>
            <person name="Okazaki Y."/>
            <person name="Orlando V."/>
            <person name="Pang K.C."/>
            <person name="Pavan W.J."/>
            <person name="Pavesi G."/>
            <person name="Pesole G."/>
            <person name="Petrovsky N."/>
            <person name="Piazza S."/>
            <person name="Reed J."/>
            <person name="Reid J.F."/>
            <person name="Ring B.Z."/>
            <person name="Ringwald M."/>
            <person name="Rost B."/>
            <person name="Ruan Y."/>
            <person name="Salzberg S.L."/>
            <person name="Sandelin A."/>
            <person name="Schneider C."/>
            <person name="Schoenbach C."/>
            <person name="Sekiguchi K."/>
            <person name="Semple C.A."/>
            <person name="Seno S."/>
            <person name="Sessa L."/>
            <person name="Sheng Y."/>
            <person name="Shibata Y."/>
            <person name="Shimada H."/>
            <person name="Shimada K."/>
            <person name="Silva D."/>
            <person name="Sinclair B."/>
            <person name="Sperling S."/>
            <person name="Stupka E."/>
            <person name="Sugiura K."/>
            <person name="Sultana R."/>
            <person name="Takenaka Y."/>
            <person name="Taki K."/>
            <person name="Tammoja K."/>
            <person name="Tan S.L."/>
            <person name="Tang S."/>
            <person name="Taylor M.S."/>
            <person name="Tegner J."/>
            <person name="Teichmann S.A."/>
            <person name="Ueda H.R."/>
            <person name="van Nimwegen E."/>
            <person name="Verardo R."/>
            <person name="Wei C.L."/>
            <person name="Yagi K."/>
            <person name="Yamanishi H."/>
            <person name="Zabarovsky E."/>
            <person name="Zhu S."/>
            <person name="Zimmer A."/>
            <person name="Hide W."/>
            <person name="Bult C."/>
            <person name="Grimmond S.M."/>
            <person name="Teasdale R.D."/>
            <person name="Liu E.T."/>
            <person name="Brusic V."/>
            <person name="Quackenbush J."/>
            <person name="Wahlestedt C."/>
            <person name="Mattick J.S."/>
            <person name="Hume D.A."/>
            <person name="Kai C."/>
            <person name="Sasaki D."/>
            <person name="Tomaru Y."/>
            <person name="Fukuda S."/>
            <person name="Kanamori-Katayama M."/>
            <person name="Suzuki M."/>
            <person name="Aoki J."/>
            <person name="Arakawa T."/>
            <person name="Iida J."/>
            <person name="Imamura K."/>
            <person name="Itoh M."/>
            <person name="Kato T."/>
            <person name="Kawaji H."/>
            <person name="Kawagashira N."/>
            <person name="Kawashima T."/>
            <person name="Kojima M."/>
            <person name="Kondo S."/>
            <person name="Konno H."/>
            <person name="Nakano K."/>
            <person name="Ninomiya N."/>
            <person name="Nishio T."/>
            <person name="Okada M."/>
            <person name="Plessy C."/>
            <person name="Shibata K."/>
            <person name="Shiraki T."/>
            <person name="Suzuki S."/>
            <person name="Tagami M."/>
            <person name="Waki K."/>
            <person name="Watahiki A."/>
            <person name="Okamura-Oho Y."/>
            <person name="Suzuki H."/>
            <person name="Kawai J."/>
            <person name="Hayashizaki Y."/>
        </authorList>
    </citation>
    <scope>NUCLEOTIDE SEQUENCE [LARGE SCALE MRNA] (ISOFORM 1)</scope>
    <source>
        <strain>C57BL/6J</strain>
        <tissue>Sympathetic ganglion</tissue>
    </source>
</reference>
<reference key="4">
    <citation type="journal article" date="2009" name="PLoS Biol.">
        <title>Lineage-specific biology revealed by a finished genome assembly of the mouse.</title>
        <authorList>
            <person name="Church D.M."/>
            <person name="Goodstadt L."/>
            <person name="Hillier L.W."/>
            <person name="Zody M.C."/>
            <person name="Goldstein S."/>
            <person name="She X."/>
            <person name="Bult C.J."/>
            <person name="Agarwala R."/>
            <person name="Cherry J.L."/>
            <person name="DiCuccio M."/>
            <person name="Hlavina W."/>
            <person name="Kapustin Y."/>
            <person name="Meric P."/>
            <person name="Maglott D."/>
            <person name="Birtle Z."/>
            <person name="Marques A.C."/>
            <person name="Graves T."/>
            <person name="Zhou S."/>
            <person name="Teague B."/>
            <person name="Potamousis K."/>
            <person name="Churas C."/>
            <person name="Place M."/>
            <person name="Herschleb J."/>
            <person name="Runnheim R."/>
            <person name="Forrest D."/>
            <person name="Amos-Landgraf J."/>
            <person name="Schwartz D.C."/>
            <person name="Cheng Z."/>
            <person name="Lindblad-Toh K."/>
            <person name="Eichler E.E."/>
            <person name="Ponting C.P."/>
        </authorList>
    </citation>
    <scope>NUCLEOTIDE SEQUENCE [LARGE SCALE GENOMIC DNA]</scope>
    <source>
        <strain>C57BL/6J</strain>
    </source>
</reference>
<reference key="5">
    <citation type="journal article" date="2004" name="Genome Res.">
        <title>The status, quality, and expansion of the NIH full-length cDNA project: the Mammalian Gene Collection (MGC).</title>
        <authorList>
            <consortium name="The MGC Project Team"/>
        </authorList>
    </citation>
    <scope>NUCLEOTIDE SEQUENCE [LARGE SCALE MRNA] (ISOFORMS 1 AND 2)</scope>
    <source>
        <strain>Czech II</strain>
        <tissue>Mammary tumor</tissue>
        <tissue>Olfactory epithelium</tissue>
    </source>
</reference>
<reference key="6">
    <citation type="journal article" date="2000" name="Biochem. Biophys. Res. Commun.">
        <title>Nucleoredoxin, glutaredoxin, and thioredoxin differentially regulate NF-kappaB, AP-1, and CREB activation in HEK293 cells.</title>
        <authorList>
            <person name="Hirota K."/>
            <person name="Matsui M."/>
            <person name="Murata M."/>
            <person name="Takashima Y."/>
            <person name="Cheng F.S."/>
            <person name="Itoh T."/>
            <person name="Fukuda K."/>
            <person name="Yodoi J."/>
        </authorList>
    </citation>
    <scope>FUNCTION</scope>
    <scope>SUBCELLULAR LOCATION</scope>
</reference>
<reference key="7">
    <citation type="journal article" date="2006" name="FEBS Lett.">
        <title>Interaction of nucleoredoxin with protein phosphatase 2A.</title>
        <authorList>
            <person name="Lechward K."/>
            <person name="Sugajska E."/>
            <person name="de Baere I."/>
            <person name="Goris J."/>
            <person name="Hemmings B.A."/>
            <person name="Zolnierowicz S."/>
        </authorList>
    </citation>
    <scope>FUNCTION</scope>
    <scope>IDENTIFICATION IN A COMPLEX WITH PHOSPHATASE 2A</scope>
    <scope>INTERACTION WITH PPP2CA</scope>
</reference>
<reference key="8">
    <citation type="journal article" date="2006" name="Nat. Cell Biol.">
        <title>The thioredoxin-related redox-regulating protein nucleoredoxin inhibits Wnt-beta-catenin signalling through dishevelled.</title>
        <authorList>
            <person name="Funato Y."/>
            <person name="Michiue T."/>
            <person name="Asashima M."/>
            <person name="Miki H."/>
        </authorList>
    </citation>
    <scope>IDENTIFICATION BY MASS SPECTROMETRY</scope>
    <scope>FUNCTION</scope>
    <scope>INTERACTION WITH DVL1</scope>
    <scope>SUBCELLULAR LOCATION</scope>
    <scope>MUTAGENESIS OF CYS-205 AND CYS-208</scope>
</reference>
<reference key="9">
    <citation type="journal article" date="2010" name="Cell">
        <title>A tissue-specific atlas of mouse protein phosphorylation and expression.</title>
        <authorList>
            <person name="Huttlin E.L."/>
            <person name="Jedrychowski M.P."/>
            <person name="Elias J.E."/>
            <person name="Goswami T."/>
            <person name="Rad R."/>
            <person name="Beausoleil S.A."/>
            <person name="Villen J."/>
            <person name="Haas W."/>
            <person name="Sowa M.E."/>
            <person name="Gygi S.P."/>
        </authorList>
    </citation>
    <scope>IDENTIFICATION BY MASS SPECTROMETRY [LARGE SCALE ANALYSIS]</scope>
    <source>
        <tissue>Brain</tissue>
        <tissue>Lung</tissue>
        <tissue>Spleen</tissue>
        <tissue>Testis</tissue>
    </source>
</reference>
<reference key="10">
    <citation type="journal article" date="2010" name="Curr. Biol.">
        <title>Nucleoredoxin sustains Wnt/beta-catenin signaling by retaining a pool of inactive dishevelled protein.</title>
        <authorList>
            <person name="Funato Y."/>
            <person name="Terabayashi T."/>
            <person name="Sakamoto R."/>
            <person name="Okuzaki D."/>
            <person name="Ichise H."/>
            <person name="Nojima H."/>
            <person name="Yoshida N."/>
            <person name="Miki H."/>
        </authorList>
    </citation>
    <scope>FUNCTION</scope>
    <scope>DISRUPTION PHENOTYPE</scope>
</reference>
<dbReference type="EC" id="1.8.1.8"/>
<dbReference type="EMBL" id="X92750">
    <property type="protein sequence ID" value="CAA63408.1"/>
    <property type="molecule type" value="Genomic_DNA"/>
</dbReference>
<dbReference type="EMBL" id="AB095441">
    <property type="protein sequence ID" value="BAD88798.1"/>
    <property type="molecule type" value="mRNA"/>
</dbReference>
<dbReference type="EMBL" id="AB095442">
    <property type="protein sequence ID" value="BAD88799.1"/>
    <property type="molecule type" value="mRNA"/>
</dbReference>
<dbReference type="EMBL" id="AB095443">
    <property type="protein sequence ID" value="BAD88800.1"/>
    <property type="molecule type" value="mRNA"/>
</dbReference>
<dbReference type="EMBL" id="AB095444">
    <property type="protein sequence ID" value="BAD88801.1"/>
    <property type="molecule type" value="mRNA"/>
</dbReference>
<dbReference type="EMBL" id="AB096016">
    <property type="protein sequence ID" value="BAD88802.1"/>
    <property type="molecule type" value="Genomic_DNA"/>
</dbReference>
<dbReference type="EMBL" id="AB096017">
    <property type="protein sequence ID" value="BAD88803.1"/>
    <property type="molecule type" value="Genomic_DNA"/>
</dbReference>
<dbReference type="EMBL" id="AB096018">
    <property type="protein sequence ID" value="BAD88804.1"/>
    <property type="molecule type" value="Genomic_DNA"/>
</dbReference>
<dbReference type="EMBL" id="AB096019">
    <property type="protein sequence ID" value="BAD88805.1"/>
    <property type="molecule type" value="Genomic_DNA"/>
</dbReference>
<dbReference type="EMBL" id="AK149075">
    <property type="protein sequence ID" value="BAE28730.1"/>
    <property type="molecule type" value="mRNA"/>
</dbReference>
<dbReference type="EMBL" id="AL663050">
    <property type="status" value="NOT_ANNOTATED_CDS"/>
    <property type="molecule type" value="Genomic_DNA"/>
</dbReference>
<dbReference type="EMBL" id="AL806529">
    <property type="status" value="NOT_ANNOTATED_CDS"/>
    <property type="molecule type" value="Genomic_DNA"/>
</dbReference>
<dbReference type="EMBL" id="BC004688">
    <property type="protein sequence ID" value="AAH04688.1"/>
    <property type="molecule type" value="mRNA"/>
</dbReference>
<dbReference type="EMBL" id="BC058244">
    <property type="protein sequence ID" value="AAH58244.1"/>
    <property type="molecule type" value="mRNA"/>
</dbReference>
<dbReference type="CCDS" id="CCDS25064.1">
    <molecule id="P97346-1"/>
</dbReference>
<dbReference type="RefSeq" id="NP_032776.1">
    <molecule id="P97346-1"/>
    <property type="nucleotide sequence ID" value="NM_008750.5"/>
</dbReference>
<dbReference type="SMR" id="P97346"/>
<dbReference type="BioGRID" id="201883">
    <property type="interactions" value="2"/>
</dbReference>
<dbReference type="FunCoup" id="P97346">
    <property type="interactions" value="1062"/>
</dbReference>
<dbReference type="IntAct" id="P97346">
    <property type="interactions" value="7"/>
</dbReference>
<dbReference type="MINT" id="P97346"/>
<dbReference type="STRING" id="10090.ENSMUSP00000021204"/>
<dbReference type="GlyGen" id="P97346">
    <property type="glycosylation" value="1 site, 1 O-linked glycan (1 site)"/>
</dbReference>
<dbReference type="PhosphoSitePlus" id="P97346"/>
<dbReference type="SwissPalm" id="P97346"/>
<dbReference type="jPOST" id="P97346"/>
<dbReference type="PaxDb" id="10090-ENSMUSP00000021204"/>
<dbReference type="PeptideAtlas" id="P97346"/>
<dbReference type="ProteomicsDB" id="293815">
    <molecule id="P97346-1"/>
</dbReference>
<dbReference type="ProteomicsDB" id="293816">
    <molecule id="P97346-2"/>
</dbReference>
<dbReference type="Pumba" id="P97346"/>
<dbReference type="Antibodypedia" id="10317">
    <property type="antibodies" value="146 antibodies from 27 providers"/>
</dbReference>
<dbReference type="DNASU" id="18230"/>
<dbReference type="Ensembl" id="ENSMUST00000021204.4">
    <molecule id="P97346-1"/>
    <property type="protein sequence ID" value="ENSMUSP00000021204.4"/>
    <property type="gene ID" value="ENSMUSG00000020844.7"/>
</dbReference>
<dbReference type="GeneID" id="18230"/>
<dbReference type="KEGG" id="mmu:18230"/>
<dbReference type="UCSC" id="uc007kfo.2">
    <molecule id="P97346-1"/>
    <property type="organism name" value="mouse"/>
</dbReference>
<dbReference type="AGR" id="MGI:109331"/>
<dbReference type="CTD" id="64359"/>
<dbReference type="MGI" id="MGI:109331">
    <property type="gene designation" value="Nxn"/>
</dbReference>
<dbReference type="VEuPathDB" id="HostDB:ENSMUSG00000020844"/>
<dbReference type="eggNOG" id="KOG2501">
    <property type="taxonomic scope" value="Eukaryota"/>
</dbReference>
<dbReference type="GeneTree" id="ENSGT00940000161894"/>
<dbReference type="HOGENOM" id="CLU_019626_2_1_1"/>
<dbReference type="InParanoid" id="P97346"/>
<dbReference type="OMA" id="NAPCRQF"/>
<dbReference type="OrthoDB" id="9440957at2759"/>
<dbReference type="PhylomeDB" id="P97346"/>
<dbReference type="TreeFam" id="TF331873"/>
<dbReference type="BioGRID-ORCS" id="18230">
    <property type="hits" value="2 hits in 76 CRISPR screens"/>
</dbReference>
<dbReference type="ChiTaRS" id="Nxn">
    <property type="organism name" value="mouse"/>
</dbReference>
<dbReference type="PRO" id="PR:P97346"/>
<dbReference type="Proteomes" id="UP000000589">
    <property type="component" value="Chromosome 11"/>
</dbReference>
<dbReference type="RNAct" id="P97346">
    <property type="molecule type" value="protein"/>
</dbReference>
<dbReference type="Bgee" id="ENSMUSG00000020844">
    <property type="expression patterns" value="Expressed in spermatocyte and 217 other cell types or tissues"/>
</dbReference>
<dbReference type="GO" id="GO:0005829">
    <property type="term" value="C:cytosol"/>
    <property type="evidence" value="ECO:0007669"/>
    <property type="project" value="UniProtKB-SubCell"/>
</dbReference>
<dbReference type="GO" id="GO:0005634">
    <property type="term" value="C:nucleus"/>
    <property type="evidence" value="ECO:0000314"/>
    <property type="project" value="MGI"/>
</dbReference>
<dbReference type="GO" id="GO:0004791">
    <property type="term" value="F:thioredoxin-disulfide reductase (NADPH) activity"/>
    <property type="evidence" value="ECO:0000314"/>
    <property type="project" value="MGI"/>
</dbReference>
<dbReference type="GO" id="GO:0030154">
    <property type="term" value="P:cell differentiation"/>
    <property type="evidence" value="ECO:0007669"/>
    <property type="project" value="UniProtKB-KW"/>
</dbReference>
<dbReference type="GO" id="GO:0072359">
    <property type="term" value="P:circulatory system development"/>
    <property type="evidence" value="ECO:0000315"/>
    <property type="project" value="UniProtKB"/>
</dbReference>
<dbReference type="GO" id="GO:0001701">
    <property type="term" value="P:in utero embryonic development"/>
    <property type="evidence" value="ECO:0000315"/>
    <property type="project" value="MGI"/>
</dbReference>
<dbReference type="GO" id="GO:0031397">
    <property type="term" value="P:negative regulation of protein ubiquitination"/>
    <property type="evidence" value="ECO:0000315"/>
    <property type="project" value="UniProtKB"/>
</dbReference>
<dbReference type="GO" id="GO:0030178">
    <property type="term" value="P:negative regulation of Wnt signaling pathway"/>
    <property type="evidence" value="ECO:0000315"/>
    <property type="project" value="UniProtKB"/>
</dbReference>
<dbReference type="GO" id="GO:0016055">
    <property type="term" value="P:Wnt signaling pathway"/>
    <property type="evidence" value="ECO:0007669"/>
    <property type="project" value="UniProtKB-KW"/>
</dbReference>
<dbReference type="CDD" id="cd03071">
    <property type="entry name" value="PDI_b'_NRX"/>
    <property type="match status" value="1"/>
</dbReference>
<dbReference type="CDD" id="cd03009">
    <property type="entry name" value="TryX_like_TryX_NRX"/>
    <property type="match status" value="1"/>
</dbReference>
<dbReference type="FunFam" id="3.40.30.10:FF:000062">
    <property type="entry name" value="Nucleoredoxin"/>
    <property type="match status" value="1"/>
</dbReference>
<dbReference type="FunFam" id="3.40.30.10:FF:000064">
    <property type="entry name" value="Nucleoredoxin"/>
    <property type="match status" value="1"/>
</dbReference>
<dbReference type="FunFam" id="3.40.30.10:FF:000210">
    <property type="entry name" value="nucleoredoxin"/>
    <property type="match status" value="1"/>
</dbReference>
<dbReference type="Gene3D" id="3.40.30.10">
    <property type="entry name" value="Glutaredoxin"/>
    <property type="match status" value="3"/>
</dbReference>
<dbReference type="InterPro" id="IPR041861">
    <property type="entry name" value="NRX_PDI_b"/>
</dbReference>
<dbReference type="InterPro" id="IPR012336">
    <property type="entry name" value="Thioredoxin-like_fold"/>
</dbReference>
<dbReference type="InterPro" id="IPR036249">
    <property type="entry name" value="Thioredoxin-like_sf"/>
</dbReference>
<dbReference type="InterPro" id="IPR013766">
    <property type="entry name" value="Thioredoxin_domain"/>
</dbReference>
<dbReference type="InterPro" id="IPR045870">
    <property type="entry name" value="TryX_NRX_thioredoxin_dom"/>
</dbReference>
<dbReference type="PANTHER" id="PTHR46472">
    <property type="entry name" value="NUCLEOREDOXIN"/>
    <property type="match status" value="1"/>
</dbReference>
<dbReference type="PANTHER" id="PTHR46472:SF1">
    <property type="entry name" value="NUCLEOREDOXIN"/>
    <property type="match status" value="1"/>
</dbReference>
<dbReference type="Pfam" id="PF13848">
    <property type="entry name" value="Thioredoxin_6"/>
    <property type="match status" value="1"/>
</dbReference>
<dbReference type="Pfam" id="PF13905">
    <property type="entry name" value="Thioredoxin_8"/>
    <property type="match status" value="2"/>
</dbReference>
<dbReference type="SUPFAM" id="SSF52833">
    <property type="entry name" value="Thioredoxin-like"/>
    <property type="match status" value="3"/>
</dbReference>
<dbReference type="PROSITE" id="PS51352">
    <property type="entry name" value="THIOREDOXIN_2"/>
    <property type="match status" value="1"/>
</dbReference>
<name>NXN_MOUSE</name>
<protein>
    <recommendedName>
        <fullName>Nucleoredoxin</fullName>
        <ecNumber>1.8.1.8</ecNumber>
    </recommendedName>
    <alternativeName>
        <fullName>Protein Red-1</fullName>
    </alternativeName>
</protein>
<organism>
    <name type="scientific">Mus musculus</name>
    <name type="common">Mouse</name>
    <dbReference type="NCBI Taxonomy" id="10090"/>
    <lineage>
        <taxon>Eukaryota</taxon>
        <taxon>Metazoa</taxon>
        <taxon>Chordata</taxon>
        <taxon>Craniata</taxon>
        <taxon>Vertebrata</taxon>
        <taxon>Euteleostomi</taxon>
        <taxon>Mammalia</taxon>
        <taxon>Eutheria</taxon>
        <taxon>Euarchontoglires</taxon>
        <taxon>Glires</taxon>
        <taxon>Rodentia</taxon>
        <taxon>Myomorpha</taxon>
        <taxon>Muroidea</taxon>
        <taxon>Muridae</taxon>
        <taxon>Murinae</taxon>
        <taxon>Mus</taxon>
        <taxon>Mus</taxon>
    </lineage>
</organism>
<sequence length="435" mass="48344">MSGFLEELLGDKLVTGGGEEVDVHSLGARGIALLGLYFGCSLSAPCAQLSASLAAFYGRLRGDAAAGPGAGAGAGAAAEPEPRHRLEIVFVSSDQDQRQWQDFVRDMPWLALPYKEKHRKLKLWNKYRVSNIPSLIFLDATTGKVVCRNGLLVIRDDPEGLEFPWGPKPFREVIAGPLLRNNGQSLESSSLEGSHVGVYFSAHWCPPCRSLTRVLVESYRKIKEAGQEFEIIFVSADRSEESFKQYFSEMPWLAVPYTDEARRSRLNRLYGIQGIPTLIVLDPQGEVITRQGRVEVLNDEDCREFPWHPKPVLELSDSNAVQLNEGPCLVLFVDSEDDGESEAAKQLIQPIAEKIIAKYKAKEEEAPLLFFVAGEDDMTDSLRDYTNLPEAAPLLTILDMSARAKYVMDVEEITPAIVETFVNDFLAEKLKPEPI</sequence>
<proteinExistence type="evidence at protein level"/>